<gene>
    <name evidence="1" type="primary">pyrB</name>
    <name type="ordered locus">Rru_A3190</name>
</gene>
<accession>Q2RPG0</accession>
<sequence length="319" mass="34977">MSAILFPEYTHRHLLGIEGLVPVEVTALLDRAEIYANRNRSANKVSDEMRGRTVINLFFENSTRTRTSFELAARRLGADVINMQVGSSSVAKGETLIDTAVTLNAMHPDVLVVRHAESGAAALLAQKVNCAVINAGDGAHEHPTQALLDALTIRRRKGRLGGLDVAICGDVLHSRVARSNIHLLTLMGARVRVVGPRPLIPSGIGELGVDIFHDMREGLRGVDIVMMLRIQMERMQGNFIPSVREYFRYFGLDREKLALAKPDALIMHPGPMNRGVEIDSDVADDFERSVIREQVEMGVAVRMAVLEVLSGNLASMETA</sequence>
<organism>
    <name type="scientific">Rhodospirillum rubrum (strain ATCC 11170 / ATH 1.1.1 / DSM 467 / LMG 4362 / NCIMB 8255 / S1)</name>
    <dbReference type="NCBI Taxonomy" id="269796"/>
    <lineage>
        <taxon>Bacteria</taxon>
        <taxon>Pseudomonadati</taxon>
        <taxon>Pseudomonadota</taxon>
        <taxon>Alphaproteobacteria</taxon>
        <taxon>Rhodospirillales</taxon>
        <taxon>Rhodospirillaceae</taxon>
        <taxon>Rhodospirillum</taxon>
    </lineage>
</organism>
<comment type="function">
    <text evidence="1">Catalyzes the condensation of carbamoyl phosphate and aspartate to form carbamoyl aspartate and inorganic phosphate, the committed step in the de novo pyrimidine nucleotide biosynthesis pathway.</text>
</comment>
<comment type="catalytic activity">
    <reaction evidence="1">
        <text>carbamoyl phosphate + L-aspartate = N-carbamoyl-L-aspartate + phosphate + H(+)</text>
        <dbReference type="Rhea" id="RHEA:20013"/>
        <dbReference type="ChEBI" id="CHEBI:15378"/>
        <dbReference type="ChEBI" id="CHEBI:29991"/>
        <dbReference type="ChEBI" id="CHEBI:32814"/>
        <dbReference type="ChEBI" id="CHEBI:43474"/>
        <dbReference type="ChEBI" id="CHEBI:58228"/>
        <dbReference type="EC" id="2.1.3.2"/>
    </reaction>
</comment>
<comment type="pathway">
    <text evidence="1">Pyrimidine metabolism; UMP biosynthesis via de novo pathway; (S)-dihydroorotate from bicarbonate: step 2/3.</text>
</comment>
<comment type="subunit">
    <text evidence="1">Heterododecamer (2C3:3R2) of six catalytic PyrB chains organized as two trimers (C3), and six regulatory PyrI chains organized as three dimers (R2).</text>
</comment>
<comment type="similarity">
    <text evidence="1">Belongs to the aspartate/ornithine carbamoyltransferase superfamily. ATCase family.</text>
</comment>
<name>PYRB_RHORT</name>
<protein>
    <recommendedName>
        <fullName evidence="1">Aspartate carbamoyltransferase catalytic subunit</fullName>
        <ecNumber evidence="1">2.1.3.2</ecNumber>
    </recommendedName>
    <alternativeName>
        <fullName evidence="1">Aspartate transcarbamylase</fullName>
        <shortName evidence="1">ATCase</shortName>
    </alternativeName>
</protein>
<keyword id="KW-0665">Pyrimidine biosynthesis</keyword>
<keyword id="KW-1185">Reference proteome</keyword>
<keyword id="KW-0808">Transferase</keyword>
<proteinExistence type="inferred from homology"/>
<feature type="chain" id="PRO_0000321151" description="Aspartate carbamoyltransferase catalytic subunit">
    <location>
        <begin position="1"/>
        <end position="319"/>
    </location>
</feature>
<feature type="binding site" evidence="1">
    <location>
        <position position="64"/>
    </location>
    <ligand>
        <name>carbamoyl phosphate</name>
        <dbReference type="ChEBI" id="CHEBI:58228"/>
    </ligand>
</feature>
<feature type="binding site" evidence="1">
    <location>
        <position position="65"/>
    </location>
    <ligand>
        <name>carbamoyl phosphate</name>
        <dbReference type="ChEBI" id="CHEBI:58228"/>
    </ligand>
</feature>
<feature type="binding site" evidence="1">
    <location>
        <position position="92"/>
    </location>
    <ligand>
        <name>L-aspartate</name>
        <dbReference type="ChEBI" id="CHEBI:29991"/>
    </ligand>
</feature>
<feature type="binding site" evidence="1">
    <location>
        <position position="114"/>
    </location>
    <ligand>
        <name>carbamoyl phosphate</name>
        <dbReference type="ChEBI" id="CHEBI:58228"/>
    </ligand>
</feature>
<feature type="binding site" evidence="1">
    <location>
        <position position="142"/>
    </location>
    <ligand>
        <name>carbamoyl phosphate</name>
        <dbReference type="ChEBI" id="CHEBI:58228"/>
    </ligand>
</feature>
<feature type="binding site" evidence="1">
    <location>
        <position position="145"/>
    </location>
    <ligand>
        <name>carbamoyl phosphate</name>
        <dbReference type="ChEBI" id="CHEBI:58228"/>
    </ligand>
</feature>
<feature type="binding site" evidence="1">
    <location>
        <position position="175"/>
    </location>
    <ligand>
        <name>L-aspartate</name>
        <dbReference type="ChEBI" id="CHEBI:29991"/>
    </ligand>
</feature>
<feature type="binding site" evidence="1">
    <location>
        <position position="229"/>
    </location>
    <ligand>
        <name>L-aspartate</name>
        <dbReference type="ChEBI" id="CHEBI:29991"/>
    </ligand>
</feature>
<feature type="binding site" evidence="1">
    <location>
        <position position="270"/>
    </location>
    <ligand>
        <name>carbamoyl phosphate</name>
        <dbReference type="ChEBI" id="CHEBI:58228"/>
    </ligand>
</feature>
<feature type="binding site" evidence="1">
    <location>
        <position position="271"/>
    </location>
    <ligand>
        <name>carbamoyl phosphate</name>
        <dbReference type="ChEBI" id="CHEBI:58228"/>
    </ligand>
</feature>
<evidence type="ECO:0000255" key="1">
    <source>
        <dbReference type="HAMAP-Rule" id="MF_00001"/>
    </source>
</evidence>
<dbReference type="EC" id="2.1.3.2" evidence="1"/>
<dbReference type="EMBL" id="CP000230">
    <property type="protein sequence ID" value="ABC23985.1"/>
    <property type="molecule type" value="Genomic_DNA"/>
</dbReference>
<dbReference type="RefSeq" id="WP_011390938.1">
    <property type="nucleotide sequence ID" value="NC_007643.1"/>
</dbReference>
<dbReference type="RefSeq" id="YP_428272.1">
    <property type="nucleotide sequence ID" value="NC_007643.1"/>
</dbReference>
<dbReference type="SMR" id="Q2RPG0"/>
<dbReference type="STRING" id="269796.Rru_A3190"/>
<dbReference type="EnsemblBacteria" id="ABC23985">
    <property type="protein sequence ID" value="ABC23985"/>
    <property type="gene ID" value="Rru_A3190"/>
</dbReference>
<dbReference type="KEGG" id="rru:Rru_A3190"/>
<dbReference type="PATRIC" id="fig|269796.9.peg.3303"/>
<dbReference type="eggNOG" id="COG0540">
    <property type="taxonomic scope" value="Bacteria"/>
</dbReference>
<dbReference type="HOGENOM" id="CLU_043846_2_0_5"/>
<dbReference type="PhylomeDB" id="Q2RPG0"/>
<dbReference type="UniPathway" id="UPA00070">
    <property type="reaction ID" value="UER00116"/>
</dbReference>
<dbReference type="Proteomes" id="UP000001929">
    <property type="component" value="Chromosome"/>
</dbReference>
<dbReference type="GO" id="GO:0005829">
    <property type="term" value="C:cytosol"/>
    <property type="evidence" value="ECO:0007669"/>
    <property type="project" value="TreeGrafter"/>
</dbReference>
<dbReference type="GO" id="GO:0016597">
    <property type="term" value="F:amino acid binding"/>
    <property type="evidence" value="ECO:0007669"/>
    <property type="project" value="InterPro"/>
</dbReference>
<dbReference type="GO" id="GO:0004070">
    <property type="term" value="F:aspartate carbamoyltransferase activity"/>
    <property type="evidence" value="ECO:0007669"/>
    <property type="project" value="UniProtKB-UniRule"/>
</dbReference>
<dbReference type="GO" id="GO:0006207">
    <property type="term" value="P:'de novo' pyrimidine nucleobase biosynthetic process"/>
    <property type="evidence" value="ECO:0007669"/>
    <property type="project" value="InterPro"/>
</dbReference>
<dbReference type="GO" id="GO:0044205">
    <property type="term" value="P:'de novo' UMP biosynthetic process"/>
    <property type="evidence" value="ECO:0007669"/>
    <property type="project" value="UniProtKB-UniRule"/>
</dbReference>
<dbReference type="GO" id="GO:0006520">
    <property type="term" value="P:amino acid metabolic process"/>
    <property type="evidence" value="ECO:0007669"/>
    <property type="project" value="InterPro"/>
</dbReference>
<dbReference type="FunFam" id="3.40.50.1370:FF:000007">
    <property type="entry name" value="Aspartate carbamoyltransferase"/>
    <property type="match status" value="1"/>
</dbReference>
<dbReference type="Gene3D" id="3.40.50.1370">
    <property type="entry name" value="Aspartate/ornithine carbamoyltransferase"/>
    <property type="match status" value="2"/>
</dbReference>
<dbReference type="HAMAP" id="MF_00001">
    <property type="entry name" value="Asp_carb_tr"/>
    <property type="match status" value="1"/>
</dbReference>
<dbReference type="InterPro" id="IPR006132">
    <property type="entry name" value="Asp/Orn_carbamoyltranf_P-bd"/>
</dbReference>
<dbReference type="InterPro" id="IPR006130">
    <property type="entry name" value="Asp/Orn_carbamoylTrfase"/>
</dbReference>
<dbReference type="InterPro" id="IPR036901">
    <property type="entry name" value="Asp/Orn_carbamoylTrfase_sf"/>
</dbReference>
<dbReference type="InterPro" id="IPR002082">
    <property type="entry name" value="Asp_carbamoyltransf"/>
</dbReference>
<dbReference type="InterPro" id="IPR006131">
    <property type="entry name" value="Asp_carbamoyltransf_Asp/Orn-bd"/>
</dbReference>
<dbReference type="NCBIfam" id="TIGR00670">
    <property type="entry name" value="asp_carb_tr"/>
    <property type="match status" value="1"/>
</dbReference>
<dbReference type="NCBIfam" id="NF002032">
    <property type="entry name" value="PRK00856.1"/>
    <property type="match status" value="1"/>
</dbReference>
<dbReference type="PANTHER" id="PTHR45753:SF6">
    <property type="entry name" value="ASPARTATE CARBAMOYLTRANSFERASE"/>
    <property type="match status" value="1"/>
</dbReference>
<dbReference type="PANTHER" id="PTHR45753">
    <property type="entry name" value="ORNITHINE CARBAMOYLTRANSFERASE, MITOCHONDRIAL"/>
    <property type="match status" value="1"/>
</dbReference>
<dbReference type="Pfam" id="PF00185">
    <property type="entry name" value="OTCace"/>
    <property type="match status" value="1"/>
</dbReference>
<dbReference type="Pfam" id="PF02729">
    <property type="entry name" value="OTCace_N"/>
    <property type="match status" value="1"/>
</dbReference>
<dbReference type="PRINTS" id="PR00100">
    <property type="entry name" value="AOTCASE"/>
</dbReference>
<dbReference type="PRINTS" id="PR00101">
    <property type="entry name" value="ATCASE"/>
</dbReference>
<dbReference type="SUPFAM" id="SSF53671">
    <property type="entry name" value="Aspartate/ornithine carbamoyltransferase"/>
    <property type="match status" value="1"/>
</dbReference>
<dbReference type="PROSITE" id="PS00097">
    <property type="entry name" value="CARBAMOYLTRANSFERASE"/>
    <property type="match status" value="1"/>
</dbReference>
<reference key="1">
    <citation type="journal article" date="2011" name="Stand. Genomic Sci.">
        <title>Complete genome sequence of Rhodospirillum rubrum type strain (S1).</title>
        <authorList>
            <person name="Munk A.C."/>
            <person name="Copeland A."/>
            <person name="Lucas S."/>
            <person name="Lapidus A."/>
            <person name="Del Rio T.G."/>
            <person name="Barry K."/>
            <person name="Detter J.C."/>
            <person name="Hammon N."/>
            <person name="Israni S."/>
            <person name="Pitluck S."/>
            <person name="Brettin T."/>
            <person name="Bruce D."/>
            <person name="Han C."/>
            <person name="Tapia R."/>
            <person name="Gilna P."/>
            <person name="Schmutz J."/>
            <person name="Larimer F."/>
            <person name="Land M."/>
            <person name="Kyrpides N.C."/>
            <person name="Mavromatis K."/>
            <person name="Richardson P."/>
            <person name="Rohde M."/>
            <person name="Goeker M."/>
            <person name="Klenk H.P."/>
            <person name="Zhang Y."/>
            <person name="Roberts G.P."/>
            <person name="Reslewic S."/>
            <person name="Schwartz D.C."/>
        </authorList>
    </citation>
    <scope>NUCLEOTIDE SEQUENCE [LARGE SCALE GENOMIC DNA]</scope>
    <source>
        <strain>ATCC 11170 / ATH 1.1.1 / DSM 467 / LMG 4362 / NCIMB 8255 / S1</strain>
    </source>
</reference>